<sequence length="835" mass="97977">MSQQHTLPVTLSPALSQELLKTVPPPVNTQQEQMKQPTPLPPPCQKVPVELPVEVPSKQEEKHMTAVKGLPEQECEQQQQEPQEQELQQQHWEQHEEHQKAENPEQQLKQEKAQRDQQLNEQLEEEKKLLDQRLDQELVKRDEQLGMKKEQLLELPEQQEQHLKHLEQQEGQLELPEQQEGQLKHLEQQEGQLKHLEQQEGQLEVPEEQVGQLKYLEQQEGQLKHLDQQEGQLKHLDQQEGQLKHLDQQEGQLKHLDQQEGQLKHLDQQEGQLELPEQQEGQLKHLEQQEGQLKHLEHEEGQLEVPEEQVGQLKYLEQQEGQLKHLDQQEGQLELPEQQEGQLKHLEQQEGQLKHLEHQKGQLEVPEEQVGQLKYLEQQEGQLKHLDQQEGQLELPEQQEGQLKHLEQQEGQLKHLEHQEGQLEVPEEQVGQLKYLEQQEGQLKHLDQQEGQLKHLDQQEKQLELPEQQVGQLKHLEQQEGQLEVPEEQVGQLKYLEQQEGQLKHLDQQEGQLELPEQQEGQLKHLEQQEGQLKHLEHQEGQLEVPEEQVGQLKYLEQQEGQLKHLDQQEGQLKHLDQQEKQLELPEQQVGQLKHLEQQEGQLEHLEGQEGQLEHLEHQEGQLGLPEQQVWQLKQLEKQEGQPKNLEEEEGQLKHLVQQEGQLEQQEGQVEHLEEQVGQLKHLEEQEGQLKYLEQQQGQLEVPEQQVGQPKHLEQEEKQLELPEQQEGQLKHLEKQEAQLELPEQQVGQPKHLEQQEKQLEHPEQKDGQLKHLEQQEGQLKNLEQQKGQLEQPVFAPAPGQVQDIQPALPTKGEVLLPVEQQQQKQEVQWPPKHK</sequence>
<protein>
    <recommendedName>
        <fullName>Involucrin</fullName>
    </recommendedName>
</protein>
<organism>
    <name type="scientific">Pongo pygmaeus</name>
    <name type="common">Bornean orangutan</name>
    <dbReference type="NCBI Taxonomy" id="9600"/>
    <lineage>
        <taxon>Eukaryota</taxon>
        <taxon>Metazoa</taxon>
        <taxon>Chordata</taxon>
        <taxon>Craniata</taxon>
        <taxon>Vertebrata</taxon>
        <taxon>Euteleostomi</taxon>
        <taxon>Mammalia</taxon>
        <taxon>Eutheria</taxon>
        <taxon>Euarchontoglires</taxon>
        <taxon>Primates</taxon>
        <taxon>Haplorrhini</taxon>
        <taxon>Catarrhini</taxon>
        <taxon>Hominidae</taxon>
        <taxon>Pongo</taxon>
    </lineage>
</organism>
<reference key="1">
    <citation type="journal article" date="1989" name="Mol. Biol. Evol.">
        <title>The involucrin gene of the orangutan: generation of the late region as an evolutionary trend in the hominoids.</title>
        <authorList>
            <person name="Djian P."/>
            <person name="Green H."/>
        </authorList>
    </citation>
    <scope>NUCLEOTIDE SEQUENCE [GENOMIC DNA]</scope>
</reference>
<evidence type="ECO:0000250" key="1"/>
<evidence type="ECO:0000256" key="2">
    <source>
        <dbReference type="SAM" id="MobiDB-lite"/>
    </source>
</evidence>
<evidence type="ECO:0000305" key="3"/>
<proteinExistence type="evidence at transcript level"/>
<comment type="function">
    <text>Part of the insoluble cornified cell envelope (CE) of stratified squamous epithelia.</text>
</comment>
<comment type="subunit">
    <text evidence="1">Directly or indirectly cross-linked to cornifelin (CNFN).</text>
</comment>
<comment type="subcellular location">
    <subcellularLocation>
        <location>Cytoplasm</location>
    </subcellularLocation>
    <text>Constituent of the scaffolding of the cornified envelope.</text>
</comment>
<comment type="tissue specificity">
    <text>Keratinocytes of epidermis and other stratified squamous epithelia.</text>
</comment>
<comment type="PTM">
    <text>Substrate of transglutaminase. Specific glutamines or lysines are cross-linked to keratins, desmoplakin and to inter involucrin molecules.</text>
</comment>
<comment type="similarity">
    <text evidence="3">Belongs to the involucrin family.</text>
</comment>
<feature type="chain" id="PRO_0000159742" description="Involucrin">
    <location>
        <begin position="1"/>
        <end position="835"/>
    </location>
</feature>
<feature type="region of interest" description="Disordered" evidence="2">
    <location>
        <begin position="1"/>
        <end position="133"/>
    </location>
</feature>
<feature type="region of interest" description="Disordered" evidence="2">
    <location>
        <begin position="150"/>
        <end position="206"/>
    </location>
</feature>
<feature type="region of interest" description="Disordered" evidence="2">
    <location>
        <begin position="221"/>
        <end position="285"/>
    </location>
</feature>
<feature type="region of interest" description="Disordered" evidence="2">
    <location>
        <begin position="321"/>
        <end position="342"/>
    </location>
</feature>
<feature type="region of interest" description="Disordered" evidence="2">
    <location>
        <begin position="381"/>
        <end position="428"/>
    </location>
</feature>
<feature type="region of interest" description="Disordered" evidence="2">
    <location>
        <begin position="446"/>
        <end position="486"/>
    </location>
</feature>
<feature type="region of interest" description="Disordered" evidence="2">
    <location>
        <begin position="501"/>
        <end position="548"/>
    </location>
</feature>
<feature type="region of interest" description="Disordered" evidence="2">
    <location>
        <begin position="566"/>
        <end position="809"/>
    </location>
</feature>
<feature type="compositionally biased region" description="Polar residues" evidence="2">
    <location>
        <begin position="1"/>
        <end position="15"/>
    </location>
</feature>
<feature type="compositionally biased region" description="Low complexity" evidence="2">
    <location>
        <begin position="76"/>
        <end position="91"/>
    </location>
</feature>
<feature type="compositionally biased region" description="Basic and acidic residues" evidence="2">
    <location>
        <begin position="92"/>
        <end position="115"/>
    </location>
</feature>
<feature type="compositionally biased region" description="Basic and acidic residues" evidence="2">
    <location>
        <begin position="159"/>
        <end position="168"/>
    </location>
</feature>
<feature type="compositionally biased region" description="Low complexity" evidence="2">
    <location>
        <begin position="169"/>
        <end position="181"/>
    </location>
</feature>
<feature type="compositionally biased region" description="Basic and acidic residues" evidence="2">
    <location>
        <begin position="182"/>
        <end position="198"/>
    </location>
</feature>
<feature type="compositionally biased region" description="Basic and acidic residues" evidence="2">
    <location>
        <begin position="222"/>
        <end position="268"/>
    </location>
</feature>
<feature type="compositionally biased region" description="Low complexity" evidence="2">
    <location>
        <begin position="269"/>
        <end position="281"/>
    </location>
</feature>
<feature type="compositionally biased region" description="Low complexity" evidence="2">
    <location>
        <begin position="329"/>
        <end position="341"/>
    </location>
</feature>
<feature type="compositionally biased region" description="Low complexity" evidence="2">
    <location>
        <begin position="389"/>
        <end position="401"/>
    </location>
</feature>
<feature type="compositionally biased region" description="Basic and acidic residues" evidence="2">
    <location>
        <begin position="402"/>
        <end position="421"/>
    </location>
</feature>
<feature type="compositionally biased region" description="Basic and acidic residues" evidence="2">
    <location>
        <begin position="446"/>
        <end position="464"/>
    </location>
</feature>
<feature type="compositionally biased region" description="Low complexity" evidence="2">
    <location>
        <begin position="509"/>
        <end position="521"/>
    </location>
</feature>
<feature type="compositionally biased region" description="Basic and acidic residues" evidence="2">
    <location>
        <begin position="522"/>
        <end position="541"/>
    </location>
</feature>
<feature type="compositionally biased region" description="Basic and acidic residues" evidence="2">
    <location>
        <begin position="566"/>
        <end position="584"/>
    </location>
</feature>
<feature type="compositionally biased region" description="Basic and acidic residues" evidence="2">
    <location>
        <begin position="594"/>
        <end position="620"/>
    </location>
</feature>
<feature type="compositionally biased region" description="Low complexity" evidence="2">
    <location>
        <begin position="655"/>
        <end position="668"/>
    </location>
</feature>
<feature type="compositionally biased region" description="Basic and acidic residues" evidence="2">
    <location>
        <begin position="669"/>
        <end position="685"/>
    </location>
</feature>
<feature type="compositionally biased region" description="Low complexity" evidence="2">
    <location>
        <begin position="693"/>
        <end position="710"/>
    </location>
</feature>
<feature type="compositionally biased region" description="Basic and acidic residues" evidence="2">
    <location>
        <begin position="711"/>
        <end position="721"/>
    </location>
</feature>
<feature type="compositionally biased region" description="Basic and acidic residues" evidence="2">
    <location>
        <begin position="729"/>
        <end position="738"/>
    </location>
</feature>
<feature type="compositionally biased region" description="Basic and acidic residues" evidence="2">
    <location>
        <begin position="751"/>
        <end position="775"/>
    </location>
</feature>
<feature type="compositionally biased region" description="Polar residues" evidence="2">
    <location>
        <begin position="776"/>
        <end position="789"/>
    </location>
</feature>
<name>INVO_PONPY</name>
<gene>
    <name type="primary">IVL</name>
</gene>
<accession>P14708</accession>
<dbReference type="EMBL" id="M25312">
    <property type="protein sequence ID" value="AAA36935.1"/>
    <property type="molecule type" value="Genomic_DNA"/>
</dbReference>
<dbReference type="PIR" id="I57441">
    <property type="entry name" value="I57441"/>
</dbReference>
<dbReference type="SMR" id="P14708"/>
<dbReference type="GO" id="GO:0001533">
    <property type="term" value="C:cornified envelope"/>
    <property type="evidence" value="ECO:0000250"/>
    <property type="project" value="UniProtKB"/>
</dbReference>
<dbReference type="GO" id="GO:0005737">
    <property type="term" value="C:cytoplasm"/>
    <property type="evidence" value="ECO:0007669"/>
    <property type="project" value="UniProtKB-SubCell"/>
</dbReference>
<dbReference type="GO" id="GO:0031424">
    <property type="term" value="P:keratinization"/>
    <property type="evidence" value="ECO:0007669"/>
    <property type="project" value="UniProtKB-KW"/>
</dbReference>
<dbReference type="GO" id="GO:0030216">
    <property type="term" value="P:keratinocyte differentiation"/>
    <property type="evidence" value="ECO:0000250"/>
    <property type="project" value="UniProtKB"/>
</dbReference>
<dbReference type="GO" id="GO:0018149">
    <property type="term" value="P:peptide cross-linking"/>
    <property type="evidence" value="ECO:0000250"/>
    <property type="project" value="UniProtKB"/>
</dbReference>
<dbReference type="GO" id="GO:0010224">
    <property type="term" value="P:response to UV-B"/>
    <property type="evidence" value="ECO:0000250"/>
    <property type="project" value="UniProtKB"/>
</dbReference>
<dbReference type="FunFam" id="3.80.10.10:FF:002753">
    <property type="entry name" value="Owl monkey involucrin (small allele)"/>
    <property type="match status" value="1"/>
</dbReference>
<dbReference type="Gene3D" id="3.80.10.10">
    <property type="entry name" value="Ribonuclease Inhibitor"/>
    <property type="match status" value="2"/>
</dbReference>
<dbReference type="InterPro" id="IPR019743">
    <property type="entry name" value="Involucrin_CS"/>
</dbReference>
<dbReference type="InterPro" id="IPR019571">
    <property type="entry name" value="Involucrin_N"/>
</dbReference>
<dbReference type="InterPro" id="IPR000354">
    <property type="entry name" value="Involucrin_rpt"/>
</dbReference>
<dbReference type="InterPro" id="IPR032675">
    <property type="entry name" value="LRR_dom_sf"/>
</dbReference>
<dbReference type="Pfam" id="PF00904">
    <property type="entry name" value="Involucrin"/>
    <property type="match status" value="33"/>
</dbReference>
<dbReference type="Pfam" id="PF10583">
    <property type="entry name" value="Involucrin_N"/>
    <property type="match status" value="1"/>
</dbReference>
<dbReference type="PROSITE" id="PS00795">
    <property type="entry name" value="INVOLUCRIN"/>
    <property type="match status" value="1"/>
</dbReference>
<keyword id="KW-0963">Cytoplasm</keyword>
<keyword id="KW-0417">Keratinization</keyword>
<keyword id="KW-0677">Repeat</keyword>